<accession>P9WJL7</accession>
<accession>L0TAC3</accession>
<accession>O06225</accession>
<accession>P65472</accession>
<sequence length="494" mass="51177">MSTEQLPPDLRRVHMVGIGGAGMSGIARILLDRGGLVSGSDAKESRGVHALRARGALIRIGHDASSLDLLPGGATAVVTTHAAIPKTNPELVEARRRGIPVVLRPAVLAKLMAGRTTLMVTGTHGKTTTTSMLIVALQHCGLDPSFAVGGELGEAGTNAHHGSGDCFVAEADESDGSLLQYTPHVAVITNIESDHLDFYGSVEAYVAVFDSFVERIVPGGALVVCTDDPGGAALAQRATELGIRVLRYGSVPGETMAATLVSWQQQGVGAVAHIRLASELATAQGPRVMRLSVPGRHMALNALGALLAAVQIGAPADEVLDGLAGFEGVRRRFELVGTCGVGKASVRVFDDYAHHPTEISATLAAARMVLEQGDGGRCMVVFQPHLYSRTKAFAAEFGRALNAADEVFVLDVYGAREQPLAGVSGASVAEHVTVPMRYVPDFSAVAQQVAAAASPGDVIVTMGAGDVTLLGPEILTALRVRANRSAPGRPGVLG</sequence>
<gene>
    <name evidence="1" type="primary">murC</name>
    <name type="ordered locus">Rv2152c</name>
    <name type="ORF">MTCY270.16</name>
</gene>
<organism>
    <name type="scientific">Mycobacterium tuberculosis (strain ATCC 25618 / H37Rv)</name>
    <dbReference type="NCBI Taxonomy" id="83332"/>
    <lineage>
        <taxon>Bacteria</taxon>
        <taxon>Bacillati</taxon>
        <taxon>Actinomycetota</taxon>
        <taxon>Actinomycetes</taxon>
        <taxon>Mycobacteriales</taxon>
        <taxon>Mycobacteriaceae</taxon>
        <taxon>Mycobacterium</taxon>
        <taxon>Mycobacterium tuberculosis complex</taxon>
    </lineage>
</organism>
<evidence type="ECO:0000255" key="1">
    <source>
        <dbReference type="HAMAP-Rule" id="MF_00046"/>
    </source>
</evidence>
<name>MURC_MYCTU</name>
<proteinExistence type="evidence at protein level"/>
<comment type="function">
    <text evidence="1">Cell wall formation.</text>
</comment>
<comment type="catalytic activity">
    <reaction evidence="1">
        <text>UDP-N-acetyl-alpha-D-muramate + L-alanine + ATP = UDP-N-acetyl-alpha-D-muramoyl-L-alanine + ADP + phosphate + H(+)</text>
        <dbReference type="Rhea" id="RHEA:23372"/>
        <dbReference type="ChEBI" id="CHEBI:15378"/>
        <dbReference type="ChEBI" id="CHEBI:30616"/>
        <dbReference type="ChEBI" id="CHEBI:43474"/>
        <dbReference type="ChEBI" id="CHEBI:57972"/>
        <dbReference type="ChEBI" id="CHEBI:70757"/>
        <dbReference type="ChEBI" id="CHEBI:83898"/>
        <dbReference type="ChEBI" id="CHEBI:456216"/>
        <dbReference type="EC" id="6.3.2.8"/>
    </reaction>
</comment>
<comment type="pathway">
    <text evidence="1">Cell wall biogenesis; peptidoglycan biosynthesis.</text>
</comment>
<comment type="subcellular location">
    <subcellularLocation>
        <location evidence="1">Cytoplasm</location>
    </subcellularLocation>
</comment>
<comment type="similarity">
    <text evidence="1">Belongs to the MurCDEF family.</text>
</comment>
<protein>
    <recommendedName>
        <fullName evidence="1">UDP-N-acetylmuramate--L-alanine ligase</fullName>
        <ecNumber evidence="1">6.3.2.8</ecNumber>
    </recommendedName>
    <alternativeName>
        <fullName evidence="1">UDP-N-acetylmuramoyl-L-alanine synthetase</fullName>
    </alternativeName>
</protein>
<dbReference type="EC" id="6.3.2.8" evidence="1"/>
<dbReference type="EMBL" id="AL123456">
    <property type="protein sequence ID" value="CCP44928.1"/>
    <property type="molecule type" value="Genomic_DNA"/>
</dbReference>
<dbReference type="PIR" id="D70579">
    <property type="entry name" value="D70579"/>
</dbReference>
<dbReference type="RefSeq" id="NP_216668.1">
    <property type="nucleotide sequence ID" value="NC_000962.3"/>
</dbReference>
<dbReference type="RefSeq" id="WP_003411159.1">
    <property type="nucleotide sequence ID" value="NZ_NVQJ01000044.1"/>
</dbReference>
<dbReference type="SMR" id="P9WJL7"/>
<dbReference type="FunCoup" id="P9WJL7">
    <property type="interactions" value="52"/>
</dbReference>
<dbReference type="STRING" id="83332.Rv2152c"/>
<dbReference type="PaxDb" id="83332-Rv2152c"/>
<dbReference type="DNASU" id="887983"/>
<dbReference type="GeneID" id="887983"/>
<dbReference type="KEGG" id="mtu:Rv2152c"/>
<dbReference type="KEGG" id="mtv:RVBD_2152c"/>
<dbReference type="TubercuList" id="Rv2152c"/>
<dbReference type="eggNOG" id="COG0773">
    <property type="taxonomic scope" value="Bacteria"/>
</dbReference>
<dbReference type="InParanoid" id="P9WJL7"/>
<dbReference type="OrthoDB" id="9804126at2"/>
<dbReference type="PhylomeDB" id="P9WJL7"/>
<dbReference type="BioCyc" id="MetaCyc:G185E-6360-MONOMER"/>
<dbReference type="UniPathway" id="UPA00219"/>
<dbReference type="Proteomes" id="UP000001584">
    <property type="component" value="Chromosome"/>
</dbReference>
<dbReference type="GO" id="GO:0005737">
    <property type="term" value="C:cytoplasm"/>
    <property type="evidence" value="ECO:0007669"/>
    <property type="project" value="UniProtKB-SubCell"/>
</dbReference>
<dbReference type="GO" id="GO:0005524">
    <property type="term" value="F:ATP binding"/>
    <property type="evidence" value="ECO:0007669"/>
    <property type="project" value="UniProtKB-UniRule"/>
</dbReference>
<dbReference type="GO" id="GO:0008763">
    <property type="term" value="F:UDP-N-acetylmuramate-L-alanine ligase activity"/>
    <property type="evidence" value="ECO:0000314"/>
    <property type="project" value="MTBBASE"/>
</dbReference>
<dbReference type="GO" id="GO:0051301">
    <property type="term" value="P:cell division"/>
    <property type="evidence" value="ECO:0007669"/>
    <property type="project" value="UniProtKB-KW"/>
</dbReference>
<dbReference type="GO" id="GO:0071555">
    <property type="term" value="P:cell wall organization"/>
    <property type="evidence" value="ECO:0007669"/>
    <property type="project" value="UniProtKB-KW"/>
</dbReference>
<dbReference type="GO" id="GO:0009252">
    <property type="term" value="P:peptidoglycan biosynthetic process"/>
    <property type="evidence" value="ECO:0000314"/>
    <property type="project" value="MTBBASE"/>
</dbReference>
<dbReference type="GO" id="GO:0008360">
    <property type="term" value="P:regulation of cell shape"/>
    <property type="evidence" value="ECO:0007669"/>
    <property type="project" value="UniProtKB-KW"/>
</dbReference>
<dbReference type="FunFam" id="3.40.50.720:FF:000046">
    <property type="entry name" value="UDP-N-acetylmuramate--L-alanine ligase"/>
    <property type="match status" value="1"/>
</dbReference>
<dbReference type="FunFam" id="3.90.190.20:FF:000016">
    <property type="entry name" value="UDP-N-acetylmuramate--L-alanine ligase"/>
    <property type="match status" value="1"/>
</dbReference>
<dbReference type="Gene3D" id="3.90.190.20">
    <property type="entry name" value="Mur ligase, C-terminal domain"/>
    <property type="match status" value="1"/>
</dbReference>
<dbReference type="Gene3D" id="3.40.1190.10">
    <property type="entry name" value="Mur-like, catalytic domain"/>
    <property type="match status" value="1"/>
</dbReference>
<dbReference type="Gene3D" id="3.40.50.720">
    <property type="entry name" value="NAD(P)-binding Rossmann-like Domain"/>
    <property type="match status" value="1"/>
</dbReference>
<dbReference type="HAMAP" id="MF_00046">
    <property type="entry name" value="MurC"/>
    <property type="match status" value="1"/>
</dbReference>
<dbReference type="InterPro" id="IPR036565">
    <property type="entry name" value="Mur-like_cat_sf"/>
</dbReference>
<dbReference type="InterPro" id="IPR004101">
    <property type="entry name" value="Mur_ligase_C"/>
</dbReference>
<dbReference type="InterPro" id="IPR036615">
    <property type="entry name" value="Mur_ligase_C_dom_sf"/>
</dbReference>
<dbReference type="InterPro" id="IPR013221">
    <property type="entry name" value="Mur_ligase_cen"/>
</dbReference>
<dbReference type="InterPro" id="IPR000713">
    <property type="entry name" value="Mur_ligase_N"/>
</dbReference>
<dbReference type="InterPro" id="IPR050061">
    <property type="entry name" value="MurCDEF_pg_biosynth"/>
</dbReference>
<dbReference type="InterPro" id="IPR005758">
    <property type="entry name" value="UDP-N-AcMur_Ala_ligase_MurC"/>
</dbReference>
<dbReference type="NCBIfam" id="TIGR01082">
    <property type="entry name" value="murC"/>
    <property type="match status" value="1"/>
</dbReference>
<dbReference type="PANTHER" id="PTHR43445:SF3">
    <property type="entry name" value="UDP-N-ACETYLMURAMATE--L-ALANINE LIGASE"/>
    <property type="match status" value="1"/>
</dbReference>
<dbReference type="PANTHER" id="PTHR43445">
    <property type="entry name" value="UDP-N-ACETYLMURAMATE--L-ALANINE LIGASE-RELATED"/>
    <property type="match status" value="1"/>
</dbReference>
<dbReference type="Pfam" id="PF01225">
    <property type="entry name" value="Mur_ligase"/>
    <property type="match status" value="1"/>
</dbReference>
<dbReference type="Pfam" id="PF02875">
    <property type="entry name" value="Mur_ligase_C"/>
    <property type="match status" value="1"/>
</dbReference>
<dbReference type="Pfam" id="PF08245">
    <property type="entry name" value="Mur_ligase_M"/>
    <property type="match status" value="1"/>
</dbReference>
<dbReference type="SUPFAM" id="SSF51984">
    <property type="entry name" value="MurCD N-terminal domain"/>
    <property type="match status" value="1"/>
</dbReference>
<dbReference type="SUPFAM" id="SSF53623">
    <property type="entry name" value="MurD-like peptide ligases, catalytic domain"/>
    <property type="match status" value="1"/>
</dbReference>
<dbReference type="SUPFAM" id="SSF53244">
    <property type="entry name" value="MurD-like peptide ligases, peptide-binding domain"/>
    <property type="match status" value="1"/>
</dbReference>
<feature type="chain" id="PRO_0000182120" description="UDP-N-acetylmuramate--L-alanine ligase">
    <location>
        <begin position="1"/>
        <end position="494"/>
    </location>
</feature>
<feature type="binding site" evidence="1">
    <location>
        <begin position="122"/>
        <end position="128"/>
    </location>
    <ligand>
        <name>ATP</name>
        <dbReference type="ChEBI" id="CHEBI:30616"/>
    </ligand>
</feature>
<keyword id="KW-0067">ATP-binding</keyword>
<keyword id="KW-0131">Cell cycle</keyword>
<keyword id="KW-0132">Cell division</keyword>
<keyword id="KW-0133">Cell shape</keyword>
<keyword id="KW-0961">Cell wall biogenesis/degradation</keyword>
<keyword id="KW-0963">Cytoplasm</keyword>
<keyword id="KW-0436">Ligase</keyword>
<keyword id="KW-0547">Nucleotide-binding</keyword>
<keyword id="KW-0573">Peptidoglycan synthesis</keyword>
<keyword id="KW-1185">Reference proteome</keyword>
<reference key="1">
    <citation type="journal article" date="1998" name="Nature">
        <title>Deciphering the biology of Mycobacterium tuberculosis from the complete genome sequence.</title>
        <authorList>
            <person name="Cole S.T."/>
            <person name="Brosch R."/>
            <person name="Parkhill J."/>
            <person name="Garnier T."/>
            <person name="Churcher C.M."/>
            <person name="Harris D.E."/>
            <person name="Gordon S.V."/>
            <person name="Eiglmeier K."/>
            <person name="Gas S."/>
            <person name="Barry C.E. III"/>
            <person name="Tekaia F."/>
            <person name="Badcock K."/>
            <person name="Basham D."/>
            <person name="Brown D."/>
            <person name="Chillingworth T."/>
            <person name="Connor R."/>
            <person name="Davies R.M."/>
            <person name="Devlin K."/>
            <person name="Feltwell T."/>
            <person name="Gentles S."/>
            <person name="Hamlin N."/>
            <person name="Holroyd S."/>
            <person name="Hornsby T."/>
            <person name="Jagels K."/>
            <person name="Krogh A."/>
            <person name="McLean J."/>
            <person name="Moule S."/>
            <person name="Murphy L.D."/>
            <person name="Oliver S."/>
            <person name="Osborne J."/>
            <person name="Quail M.A."/>
            <person name="Rajandream M.A."/>
            <person name="Rogers J."/>
            <person name="Rutter S."/>
            <person name="Seeger K."/>
            <person name="Skelton S."/>
            <person name="Squares S."/>
            <person name="Squares R."/>
            <person name="Sulston J.E."/>
            <person name="Taylor K."/>
            <person name="Whitehead S."/>
            <person name="Barrell B.G."/>
        </authorList>
    </citation>
    <scope>NUCLEOTIDE SEQUENCE [LARGE SCALE GENOMIC DNA]</scope>
    <source>
        <strain>ATCC 25618 / H37Rv</strain>
    </source>
</reference>
<reference key="2">
    <citation type="journal article" date="2011" name="Mol. Cell. Proteomics">
        <title>Proteogenomic analysis of Mycobacterium tuberculosis by high resolution mass spectrometry.</title>
        <authorList>
            <person name="Kelkar D.S."/>
            <person name="Kumar D."/>
            <person name="Kumar P."/>
            <person name="Balakrishnan L."/>
            <person name="Muthusamy B."/>
            <person name="Yadav A.K."/>
            <person name="Shrivastava P."/>
            <person name="Marimuthu A."/>
            <person name="Anand S."/>
            <person name="Sundaram H."/>
            <person name="Kingsbury R."/>
            <person name="Harsha H.C."/>
            <person name="Nair B."/>
            <person name="Prasad T.S."/>
            <person name="Chauhan D.S."/>
            <person name="Katoch K."/>
            <person name="Katoch V.M."/>
            <person name="Kumar P."/>
            <person name="Chaerkady R."/>
            <person name="Ramachandran S."/>
            <person name="Dash D."/>
            <person name="Pandey A."/>
        </authorList>
    </citation>
    <scope>IDENTIFICATION BY MASS SPECTROMETRY [LARGE SCALE ANALYSIS]</scope>
    <source>
        <strain>ATCC 25618 / H37Rv</strain>
    </source>
</reference>